<protein>
    <recommendedName>
        <fullName evidence="3">Fructoselysine 6-kinase</fullName>
        <ecNumber evidence="1">2.7.1.218</ecNumber>
    </recommendedName>
</protein>
<gene>
    <name evidence="3" type="primary">frlD</name>
    <name type="synonym">yhfQ</name>
    <name type="ordered locus">b3374</name>
    <name type="ordered locus">JW3337</name>
</gene>
<keyword id="KW-0067">ATP-binding</keyword>
<keyword id="KW-0418">Kinase</keyword>
<keyword id="KW-0547">Nucleotide-binding</keyword>
<keyword id="KW-1185">Reference proteome</keyword>
<keyword id="KW-0808">Transferase</keyword>
<name>FRLD_ECOLI</name>
<accession>P45543</accession>
<accession>Q2M739</accession>
<reference key="1">
    <citation type="journal article" date="1997" name="Science">
        <title>The complete genome sequence of Escherichia coli K-12.</title>
        <authorList>
            <person name="Blattner F.R."/>
            <person name="Plunkett G. III"/>
            <person name="Bloch C.A."/>
            <person name="Perna N.T."/>
            <person name="Burland V."/>
            <person name="Riley M."/>
            <person name="Collado-Vides J."/>
            <person name="Glasner J.D."/>
            <person name="Rode C.K."/>
            <person name="Mayhew G.F."/>
            <person name="Gregor J."/>
            <person name="Davis N.W."/>
            <person name="Kirkpatrick H.A."/>
            <person name="Goeden M.A."/>
            <person name="Rose D.J."/>
            <person name="Mau B."/>
            <person name="Shao Y."/>
        </authorList>
    </citation>
    <scope>NUCLEOTIDE SEQUENCE [LARGE SCALE GENOMIC DNA]</scope>
    <source>
        <strain>K12 / MG1655 / ATCC 47076</strain>
    </source>
</reference>
<reference key="2">
    <citation type="journal article" date="2006" name="Mol. Syst. Biol.">
        <title>Highly accurate genome sequences of Escherichia coli K-12 strains MG1655 and W3110.</title>
        <authorList>
            <person name="Hayashi K."/>
            <person name="Morooka N."/>
            <person name="Yamamoto Y."/>
            <person name="Fujita K."/>
            <person name="Isono K."/>
            <person name="Choi S."/>
            <person name="Ohtsubo E."/>
            <person name="Baba T."/>
            <person name="Wanner B.L."/>
            <person name="Mori H."/>
            <person name="Horiuchi T."/>
        </authorList>
    </citation>
    <scope>NUCLEOTIDE SEQUENCE [LARGE SCALE GENOMIC DNA]</scope>
    <source>
        <strain>K12 / W3110 / ATCC 27325 / DSM 5911</strain>
    </source>
</reference>
<reference key="3">
    <citation type="journal article" date="2002" name="J. Biol. Chem.">
        <title>Identification of a pathway for the utilization of the Amadori product fructoselysine in Escherichia coli.</title>
        <authorList>
            <person name="Wiame E."/>
            <person name="Delpierre G."/>
            <person name="Collard F."/>
            <person name="Van Schaftingen E."/>
        </authorList>
    </citation>
    <scope>FUNCTION</scope>
    <scope>CATALYTIC ACTIVITY</scope>
    <scope>BIOPHYSICOCHEMICAL PROPERTIES</scope>
    <scope>PATHWAY</scope>
    <scope>INDUCTION</scope>
    <scope>SUBUNIT</scope>
</reference>
<reference key="4">
    <citation type="journal article" date="2004" name="Biochem. J.">
        <title>Fructoselysine 3-epimerase, an enzyme involved in the metabolism of the unusual Amadori compound psicoselysine in Escherichia coli.</title>
        <authorList>
            <person name="Wiame E."/>
            <person name="Van Schaftingen E."/>
        </authorList>
    </citation>
    <scope>FUNCTION</scope>
    <scope>BIOPHYSICOCHEMICAL PROPERTIES</scope>
    <scope>INDUCTION</scope>
    <scope>PATHWAY</scope>
</reference>
<organism>
    <name type="scientific">Escherichia coli (strain K12)</name>
    <dbReference type="NCBI Taxonomy" id="83333"/>
    <lineage>
        <taxon>Bacteria</taxon>
        <taxon>Pseudomonadati</taxon>
        <taxon>Pseudomonadota</taxon>
        <taxon>Gammaproteobacteria</taxon>
        <taxon>Enterobacterales</taxon>
        <taxon>Enterobacteriaceae</taxon>
        <taxon>Escherichia</taxon>
    </lineage>
</organism>
<feature type="chain" id="PRO_0000080066" description="Fructoselysine 6-kinase">
    <location>
        <begin position="1"/>
        <end position="261"/>
    </location>
</feature>
<dbReference type="EC" id="2.7.1.218" evidence="1"/>
<dbReference type="EMBL" id="U18997">
    <property type="protein sequence ID" value="AAA58171.1"/>
    <property type="molecule type" value="Genomic_DNA"/>
</dbReference>
<dbReference type="EMBL" id="U00096">
    <property type="protein sequence ID" value="AAC76399.1"/>
    <property type="molecule type" value="Genomic_DNA"/>
</dbReference>
<dbReference type="EMBL" id="AP009048">
    <property type="protein sequence ID" value="BAE77917.1"/>
    <property type="molecule type" value="Genomic_DNA"/>
</dbReference>
<dbReference type="PIR" id="A65132">
    <property type="entry name" value="A65132"/>
</dbReference>
<dbReference type="RefSeq" id="NP_417833.1">
    <property type="nucleotide sequence ID" value="NC_000913.3"/>
</dbReference>
<dbReference type="RefSeq" id="WP_000853353.1">
    <property type="nucleotide sequence ID" value="NZ_SSZK01000008.1"/>
</dbReference>
<dbReference type="SMR" id="P45543"/>
<dbReference type="BioGRID" id="4262482">
    <property type="interactions" value="14"/>
</dbReference>
<dbReference type="BioGRID" id="852195">
    <property type="interactions" value="5"/>
</dbReference>
<dbReference type="DIP" id="DIP-12326N"/>
<dbReference type="FunCoup" id="P45543">
    <property type="interactions" value="158"/>
</dbReference>
<dbReference type="IntAct" id="P45543">
    <property type="interactions" value="9"/>
</dbReference>
<dbReference type="STRING" id="511145.b3374"/>
<dbReference type="PaxDb" id="511145-b3374"/>
<dbReference type="EnsemblBacteria" id="AAC76399">
    <property type="protein sequence ID" value="AAC76399"/>
    <property type="gene ID" value="b3374"/>
</dbReference>
<dbReference type="GeneID" id="947886"/>
<dbReference type="KEGG" id="ecj:JW3337"/>
<dbReference type="KEGG" id="eco:b3374"/>
<dbReference type="PATRIC" id="fig|511145.12.peg.3467"/>
<dbReference type="EchoBASE" id="EB2748"/>
<dbReference type="eggNOG" id="COG0524">
    <property type="taxonomic scope" value="Bacteria"/>
</dbReference>
<dbReference type="HOGENOM" id="CLU_027634_13_0_6"/>
<dbReference type="InParanoid" id="P45543"/>
<dbReference type="OMA" id="DYGFVSC"/>
<dbReference type="OrthoDB" id="9792663at2"/>
<dbReference type="PhylomeDB" id="P45543"/>
<dbReference type="BioCyc" id="EcoCyc:G7726-MONOMER"/>
<dbReference type="BioCyc" id="MetaCyc:G7726-MONOMER"/>
<dbReference type="BRENDA" id="2.7.1.218">
    <property type="organism ID" value="2026"/>
</dbReference>
<dbReference type="SABIO-RK" id="P45543"/>
<dbReference type="UniPathway" id="UPA00784">
    <property type="reaction ID" value="UER00769"/>
</dbReference>
<dbReference type="PRO" id="PR:P45543"/>
<dbReference type="Proteomes" id="UP000000625">
    <property type="component" value="Chromosome"/>
</dbReference>
<dbReference type="GO" id="GO:0005524">
    <property type="term" value="F:ATP binding"/>
    <property type="evidence" value="ECO:0007669"/>
    <property type="project" value="UniProtKB-KW"/>
</dbReference>
<dbReference type="GO" id="GO:0019200">
    <property type="term" value="F:carbohydrate kinase activity"/>
    <property type="evidence" value="ECO:0000314"/>
    <property type="project" value="EcoCyc"/>
</dbReference>
<dbReference type="CDD" id="cd01940">
    <property type="entry name" value="Fructoselysine_kinase_like"/>
    <property type="match status" value="1"/>
</dbReference>
<dbReference type="FunFam" id="3.40.1190.20:FF:000030">
    <property type="entry name" value="Kinase, PfkB family"/>
    <property type="match status" value="1"/>
</dbReference>
<dbReference type="Gene3D" id="3.40.1190.20">
    <property type="match status" value="1"/>
</dbReference>
<dbReference type="InterPro" id="IPR052700">
    <property type="entry name" value="Carb_kinase_PfkB-like"/>
</dbReference>
<dbReference type="InterPro" id="IPR002173">
    <property type="entry name" value="Carboh/pur_kinase_PfkB_CS"/>
</dbReference>
<dbReference type="InterPro" id="IPR011611">
    <property type="entry name" value="PfkB_dom"/>
</dbReference>
<dbReference type="InterPro" id="IPR029056">
    <property type="entry name" value="Ribokinase-like"/>
</dbReference>
<dbReference type="NCBIfam" id="NF007321">
    <property type="entry name" value="PRK09813.1"/>
    <property type="match status" value="1"/>
</dbReference>
<dbReference type="PANTHER" id="PTHR43320:SF3">
    <property type="entry name" value="CARBOHYDRATE KINASE PFKB DOMAIN-CONTAINING PROTEIN"/>
    <property type="match status" value="1"/>
</dbReference>
<dbReference type="PANTHER" id="PTHR43320">
    <property type="entry name" value="SUGAR KINASE"/>
    <property type="match status" value="1"/>
</dbReference>
<dbReference type="Pfam" id="PF00294">
    <property type="entry name" value="PfkB"/>
    <property type="match status" value="1"/>
</dbReference>
<dbReference type="SUPFAM" id="SSF53613">
    <property type="entry name" value="Ribokinase-like"/>
    <property type="match status" value="1"/>
</dbReference>
<dbReference type="PROSITE" id="PS00583">
    <property type="entry name" value="PFKB_KINASES_1"/>
    <property type="match status" value="1"/>
</dbReference>
<dbReference type="PROSITE" id="PS00584">
    <property type="entry name" value="PFKB_KINASES_2"/>
    <property type="match status" value="1"/>
</dbReference>
<comment type="function">
    <text evidence="1 2">Catalyzes the ATP-dependent phosphorylation of fructoselysine to fructoselysine 6-phosphate (PubMed:12147680). Functions in a fructoselysine degradation pathway that allows E.coli to grow on fructoselysine or psicoselysine (PubMed:12147680, PubMed:14641112). To a much lesser extenst, is also able to phosphorylate psicoselysine (PubMed:14641112).</text>
</comment>
<comment type="catalytic activity">
    <reaction evidence="1">
        <text>N(6)-(D-fructosyl)-L-lysine + ATP = N(6)-(6-phospho-D-fructosyl)-L-lysine + ADP + H(+)</text>
        <dbReference type="Rhea" id="RHEA:28378"/>
        <dbReference type="ChEBI" id="CHEBI:15378"/>
        <dbReference type="ChEBI" id="CHEBI:30616"/>
        <dbReference type="ChEBI" id="CHEBI:61392"/>
        <dbReference type="ChEBI" id="CHEBI:61393"/>
        <dbReference type="ChEBI" id="CHEBI:456216"/>
        <dbReference type="EC" id="2.7.1.218"/>
    </reaction>
</comment>
<comment type="biophysicochemical properties">
    <kinetics>
        <KM evidence="1">18 uM for fructoselysine</KM>
        <KM evidence="1">50 uM for ATP</KM>
        <KM evidence="2">10 mM for psicoselysine</KM>
        <Vmax evidence="1">30.0 umol/min/mg enzyme with fructoselysine as substrate</Vmax>
        <Vmax evidence="2">9.0 umol/min/mg enzyme with psicoselysine as substrate</Vmax>
    </kinetics>
</comment>
<comment type="pathway">
    <text evidence="5 6">Carbohydrate metabolism; fructoselysine degradation; D-glucose 6-phosphate and lysine from fructoselysine: step 1/2.</text>
</comment>
<comment type="subunit">
    <text evidence="1">Monomer.</text>
</comment>
<comment type="interaction">
    <interactant intactId="EBI-562037">
        <id>P45543</id>
    </interactant>
    <interactant intactId="EBI-546020">
        <id>P0AG07</id>
        <label>rpe</label>
    </interactant>
    <organismsDiffer>false</organismsDiffer>
    <experiments>5</experiments>
</comment>
<comment type="interaction">
    <interactant intactId="EBI-562037">
        <id>P45543</id>
    </interactant>
    <interactant intactId="EBI-557436">
        <id>P05704</id>
        <label>trg</label>
    </interactant>
    <organismsDiffer>false</organismsDiffer>
    <experiments>5</experiments>
</comment>
<comment type="induction">
    <text evidence="1 2">Induced by fructoselysine and psicoselysine. Makes part of the frl operon with FrlA, FrlB, FrlC and FrlR.</text>
</comment>
<comment type="similarity">
    <text evidence="4">Belongs to the carbohydrate kinase PfkB family.</text>
</comment>
<proteinExistence type="evidence at protein level"/>
<evidence type="ECO:0000269" key="1">
    <source>
    </source>
</evidence>
<evidence type="ECO:0000269" key="2">
    <source>
    </source>
</evidence>
<evidence type="ECO:0000303" key="3">
    <source>
    </source>
</evidence>
<evidence type="ECO:0000305" key="4"/>
<evidence type="ECO:0000305" key="5">
    <source>
    </source>
</evidence>
<evidence type="ECO:0000305" key="6">
    <source>
    </source>
</evidence>
<sequence>MKTLATIGDNCVDIYPQLNKAFSGGNAVNVAVYCTRYGIQPGCITWVGDDDYGTKLKQDLARMGVDISHVHTKHGVTAQTQVELHDNDRVFGDYTEGVMADFALSEEDYAWLAQYDIVHAAIWGHAEDAFPQLHAAGKLTAFDFSDKWDSPLWQTLVPHLDFAFASAPQEDETLRLKMKAIVARGAGTVIVTLGENGSIAWDGAQFWRQAPEPVTVIDTMGAGDSFIAGFLCGWSAGMTLPQAIAQGTACAAKTIQYHGAW</sequence>